<gene>
    <name type="primary">CEF1</name>
    <name type="ordered locus">DEHA2F10901g</name>
</gene>
<evidence type="ECO:0000250" key="1"/>
<evidence type="ECO:0000255" key="2"/>
<evidence type="ECO:0000255" key="3">
    <source>
        <dbReference type="PROSITE-ProRule" id="PRU00625"/>
    </source>
</evidence>
<evidence type="ECO:0000256" key="4">
    <source>
        <dbReference type="SAM" id="MobiDB-lite"/>
    </source>
</evidence>
<evidence type="ECO:0000305" key="5"/>
<accession>Q6BLT3</accession>
<organism>
    <name type="scientific">Debaryomyces hansenii (strain ATCC 36239 / CBS 767 / BCRC 21394 / JCM 1990 / NBRC 0083 / IGC 2968)</name>
    <name type="common">Yeast</name>
    <name type="synonym">Torulaspora hansenii</name>
    <dbReference type="NCBI Taxonomy" id="284592"/>
    <lineage>
        <taxon>Eukaryota</taxon>
        <taxon>Fungi</taxon>
        <taxon>Dikarya</taxon>
        <taxon>Ascomycota</taxon>
        <taxon>Saccharomycotina</taxon>
        <taxon>Pichiomycetes</taxon>
        <taxon>Debaryomycetaceae</taxon>
        <taxon>Debaryomyces</taxon>
    </lineage>
</organism>
<reference key="1">
    <citation type="journal article" date="2004" name="Nature">
        <title>Genome evolution in yeasts.</title>
        <authorList>
            <person name="Dujon B."/>
            <person name="Sherman D."/>
            <person name="Fischer G."/>
            <person name="Durrens P."/>
            <person name="Casaregola S."/>
            <person name="Lafontaine I."/>
            <person name="de Montigny J."/>
            <person name="Marck C."/>
            <person name="Neuveglise C."/>
            <person name="Talla E."/>
            <person name="Goffard N."/>
            <person name="Frangeul L."/>
            <person name="Aigle M."/>
            <person name="Anthouard V."/>
            <person name="Babour A."/>
            <person name="Barbe V."/>
            <person name="Barnay S."/>
            <person name="Blanchin S."/>
            <person name="Beckerich J.-M."/>
            <person name="Beyne E."/>
            <person name="Bleykasten C."/>
            <person name="Boisrame A."/>
            <person name="Boyer J."/>
            <person name="Cattolico L."/>
            <person name="Confanioleri F."/>
            <person name="de Daruvar A."/>
            <person name="Despons L."/>
            <person name="Fabre E."/>
            <person name="Fairhead C."/>
            <person name="Ferry-Dumazet H."/>
            <person name="Groppi A."/>
            <person name="Hantraye F."/>
            <person name="Hennequin C."/>
            <person name="Jauniaux N."/>
            <person name="Joyet P."/>
            <person name="Kachouri R."/>
            <person name="Kerrest A."/>
            <person name="Koszul R."/>
            <person name="Lemaire M."/>
            <person name="Lesur I."/>
            <person name="Ma L."/>
            <person name="Muller H."/>
            <person name="Nicaud J.-M."/>
            <person name="Nikolski M."/>
            <person name="Oztas S."/>
            <person name="Ozier-Kalogeropoulos O."/>
            <person name="Pellenz S."/>
            <person name="Potier S."/>
            <person name="Richard G.-F."/>
            <person name="Straub M.-L."/>
            <person name="Suleau A."/>
            <person name="Swennen D."/>
            <person name="Tekaia F."/>
            <person name="Wesolowski-Louvel M."/>
            <person name="Westhof E."/>
            <person name="Wirth B."/>
            <person name="Zeniou-Meyer M."/>
            <person name="Zivanovic Y."/>
            <person name="Bolotin-Fukuhara M."/>
            <person name="Thierry A."/>
            <person name="Bouchier C."/>
            <person name="Caudron B."/>
            <person name="Scarpelli C."/>
            <person name="Gaillardin C."/>
            <person name="Weissenbach J."/>
            <person name="Wincker P."/>
            <person name="Souciet J.-L."/>
        </authorList>
    </citation>
    <scope>NUCLEOTIDE SEQUENCE [LARGE SCALE GENOMIC DNA]</scope>
    <source>
        <strain>ATCC 36239 / CBS 767 / BCRC 21394 / JCM 1990 / NBRC 0083 / IGC 2968</strain>
    </source>
</reference>
<name>CEF1_DEBHA</name>
<dbReference type="EMBL" id="CR382138">
    <property type="status" value="NOT_ANNOTATED_CDS"/>
    <property type="molecule type" value="Genomic_DNA"/>
</dbReference>
<dbReference type="SMR" id="Q6BLT3"/>
<dbReference type="FunCoup" id="Q6BLT3">
    <property type="interactions" value="139"/>
</dbReference>
<dbReference type="STRING" id="284592.Q6BLT3"/>
<dbReference type="InParanoid" id="Q6BLT3"/>
<dbReference type="Proteomes" id="UP000000599">
    <property type="component" value="Chromosome F"/>
</dbReference>
<dbReference type="GO" id="GO:0005737">
    <property type="term" value="C:cytoplasm"/>
    <property type="evidence" value="ECO:0007669"/>
    <property type="project" value="UniProtKB-SubCell"/>
</dbReference>
<dbReference type="GO" id="GO:0000974">
    <property type="term" value="C:Prp19 complex"/>
    <property type="evidence" value="ECO:0007669"/>
    <property type="project" value="InterPro"/>
</dbReference>
<dbReference type="GO" id="GO:0005681">
    <property type="term" value="C:spliceosomal complex"/>
    <property type="evidence" value="ECO:0007669"/>
    <property type="project" value="UniProtKB-KW"/>
</dbReference>
<dbReference type="GO" id="GO:0003677">
    <property type="term" value="F:DNA binding"/>
    <property type="evidence" value="ECO:0007669"/>
    <property type="project" value="UniProtKB-KW"/>
</dbReference>
<dbReference type="GO" id="GO:0000398">
    <property type="term" value="P:mRNA splicing, via spliceosome"/>
    <property type="evidence" value="ECO:0007669"/>
    <property type="project" value="InterPro"/>
</dbReference>
<dbReference type="CDD" id="cd00167">
    <property type="entry name" value="SANT"/>
    <property type="match status" value="1"/>
</dbReference>
<dbReference type="CDD" id="cd11659">
    <property type="entry name" value="SANT_CDC5_II"/>
    <property type="match status" value="1"/>
</dbReference>
<dbReference type="FunFam" id="1.10.10.60:FF:000021">
    <property type="entry name" value="CDC5 cell division cycle 5-like"/>
    <property type="match status" value="1"/>
</dbReference>
<dbReference type="Gene3D" id="1.10.10.60">
    <property type="entry name" value="Homeodomain-like"/>
    <property type="match status" value="2"/>
</dbReference>
<dbReference type="InterPro" id="IPR047242">
    <property type="entry name" value="CDC5L/Cef1"/>
</dbReference>
<dbReference type="InterPro" id="IPR021786">
    <property type="entry name" value="Cdc5p/Cef1_C"/>
</dbReference>
<dbReference type="InterPro" id="IPR009057">
    <property type="entry name" value="Homeodomain-like_sf"/>
</dbReference>
<dbReference type="InterPro" id="IPR017930">
    <property type="entry name" value="Myb_dom"/>
</dbReference>
<dbReference type="InterPro" id="IPR001005">
    <property type="entry name" value="SANT/Myb"/>
</dbReference>
<dbReference type="InterPro" id="IPR047240">
    <property type="entry name" value="SANT_CDC5L_II"/>
</dbReference>
<dbReference type="PANTHER" id="PTHR45885">
    <property type="entry name" value="CELL DIVISION CYCLE 5-LIKE PROTEIN"/>
    <property type="match status" value="1"/>
</dbReference>
<dbReference type="PANTHER" id="PTHR45885:SF1">
    <property type="entry name" value="CELL DIVISION CYCLE 5-LIKE PROTEIN"/>
    <property type="match status" value="1"/>
</dbReference>
<dbReference type="Pfam" id="PF11831">
    <property type="entry name" value="Myb_Cef"/>
    <property type="match status" value="1"/>
</dbReference>
<dbReference type="Pfam" id="PF13921">
    <property type="entry name" value="Myb_DNA-bind_6"/>
    <property type="match status" value="1"/>
</dbReference>
<dbReference type="SMART" id="SM00717">
    <property type="entry name" value="SANT"/>
    <property type="match status" value="2"/>
</dbReference>
<dbReference type="SUPFAM" id="SSF46689">
    <property type="entry name" value="Homeodomain-like"/>
    <property type="match status" value="1"/>
</dbReference>
<dbReference type="PROSITE" id="PS51294">
    <property type="entry name" value="HTH_MYB"/>
    <property type="match status" value="2"/>
</dbReference>
<proteinExistence type="inferred from homology"/>
<sequence length="668" mass="76301">MPPIYVKGGVWTNVEDEILKAAVSKYGLNQWSRVASLLAKKSAKQAKARWNEWLNPNIDKSEWTREEDEKLLSLAKLLPNQWRSIAPIIGRTATHCVERYQKLLEDTNDVGIEGDENDLRLSGPGIESLPATGTSHVGDLNINPESKPAKPDEEDMDDEEKEMLSEARARLANTQGKKAKRKARERMLEESKRISLLQKRRELKAAGMKVSLESKNKKRRQEFDYNADIPHEHEPQSGLYDVDEENEANRLERIKFERGVAKEGIPLQEVDEKHKKQKQEAKKSKDDGAKQTQMSLEAAAEVFHEREQEILKRRKLDLPAPEISLDTQPPIGESGSINISDITTKDSNQEGIDDRILKATRELKRNQATKSSLLAEDTPEIKKETLSKEPTSSKLKSQWKKSVLNLLKSYFAKLPKPHNDIGIILPSYDPNEEPITASNEMSTDSRVDQGERLRNLEILRQVDEEKAKLRRSQAVQRELPIPKPSSLQQIDTSKCSKLDLLIFNEMRTLLNSDYAKYEDPTFKTNLIDDLDEESFGIVNNEISGELMKMESAKVSPKSSHLPKTYEMAEQIISKLHELSSESSSIENSISANINISAFNYRENNALQNIDNLYNELNRADIELKGYTKMLQNEEISIESRSKYLHELVDDLVDNEHLLEEKVRMLRRT</sequence>
<comment type="function">
    <text evidence="1">Involved in pre-mRNA splicing and cell cycle control.</text>
</comment>
<comment type="subunit">
    <text evidence="1">Associated with the spliceosome.</text>
</comment>
<comment type="subcellular location">
    <subcellularLocation>
        <location evidence="1">Cytoplasm</location>
    </subcellularLocation>
    <subcellularLocation>
        <location evidence="3">Nucleus</location>
    </subcellularLocation>
</comment>
<comment type="similarity">
    <text evidence="5">Belongs to the CEF1 family.</text>
</comment>
<comment type="sequence caution" evidence="5">
    <conflict type="frameshift">
        <sequence resource="EMBL" id="CR382138"/>
    </conflict>
</comment>
<protein>
    <recommendedName>
        <fullName>Pre-mRNA-splicing factor CEF1</fullName>
    </recommendedName>
</protein>
<keyword id="KW-0175">Coiled coil</keyword>
<keyword id="KW-0963">Cytoplasm</keyword>
<keyword id="KW-0238">DNA-binding</keyword>
<keyword id="KW-0507">mRNA processing</keyword>
<keyword id="KW-0508">mRNA splicing</keyword>
<keyword id="KW-0539">Nucleus</keyword>
<keyword id="KW-1185">Reference proteome</keyword>
<keyword id="KW-0677">Repeat</keyword>
<keyword id="KW-0747">Spliceosome</keyword>
<feature type="chain" id="PRO_0000197099" description="Pre-mRNA-splicing factor CEF1">
    <location>
        <begin position="1"/>
        <end position="668"/>
    </location>
</feature>
<feature type="domain" description="HTH myb-type 1" evidence="3">
    <location>
        <begin position="1"/>
        <end position="58"/>
    </location>
</feature>
<feature type="domain" description="HTH myb-type 2" evidence="3">
    <location>
        <begin position="60"/>
        <end position="108"/>
    </location>
</feature>
<feature type="DNA-binding region" description="H-T-H motif" evidence="3">
    <location>
        <begin position="31"/>
        <end position="54"/>
    </location>
</feature>
<feature type="DNA-binding region" description="H-T-H motif" evidence="3">
    <location>
        <begin position="82"/>
        <end position="104"/>
    </location>
</feature>
<feature type="region of interest" description="Disordered" evidence="4">
    <location>
        <begin position="111"/>
        <end position="190"/>
    </location>
</feature>
<feature type="region of interest" description="Disordered" evidence="4">
    <location>
        <begin position="262"/>
        <end position="293"/>
    </location>
</feature>
<feature type="region of interest" description="Disordered" evidence="4">
    <location>
        <begin position="322"/>
        <end position="346"/>
    </location>
</feature>
<feature type="coiled-coil region" evidence="2">
    <location>
        <begin position="158"/>
        <end position="202"/>
    </location>
</feature>
<feature type="coiled-coil region" evidence="2">
    <location>
        <begin position="599"/>
        <end position="635"/>
    </location>
</feature>
<feature type="compositionally biased region" description="Acidic residues" evidence="4">
    <location>
        <begin position="152"/>
        <end position="161"/>
    </location>
</feature>
<feature type="compositionally biased region" description="Basic and acidic residues" evidence="4">
    <location>
        <begin position="270"/>
        <end position="289"/>
    </location>
</feature>